<keyword id="KW-0143">Chaperone</keyword>
<keyword id="KW-0963">Cytoplasm</keyword>
<keyword id="KW-0235">DNA replication</keyword>
<keyword id="KW-0479">Metal-binding</keyword>
<keyword id="KW-1185">Reference proteome</keyword>
<keyword id="KW-0677">Repeat</keyword>
<keyword id="KW-0346">Stress response</keyword>
<keyword id="KW-0862">Zinc</keyword>
<keyword id="KW-0863">Zinc-finger</keyword>
<protein>
    <recommendedName>
        <fullName evidence="1">Chaperone protein DnaJ 1</fullName>
    </recommendedName>
</protein>
<gene>
    <name evidence="1" type="primary">dnaJ1</name>
    <name type="ordered locus">DIP1720</name>
</gene>
<reference key="1">
    <citation type="journal article" date="2003" name="Nucleic Acids Res.">
        <title>The complete genome sequence and analysis of Corynebacterium diphtheriae NCTC13129.</title>
        <authorList>
            <person name="Cerdeno-Tarraga A.-M."/>
            <person name="Efstratiou A."/>
            <person name="Dover L.G."/>
            <person name="Holden M.T.G."/>
            <person name="Pallen M.J."/>
            <person name="Bentley S.D."/>
            <person name="Besra G.S."/>
            <person name="Churcher C.M."/>
            <person name="James K.D."/>
            <person name="De Zoysa A."/>
            <person name="Chillingworth T."/>
            <person name="Cronin A."/>
            <person name="Dowd L."/>
            <person name="Feltwell T."/>
            <person name="Hamlin N."/>
            <person name="Holroyd S."/>
            <person name="Jagels K."/>
            <person name="Moule S."/>
            <person name="Quail M.A."/>
            <person name="Rabbinowitsch E."/>
            <person name="Rutherford K.M."/>
            <person name="Thomson N.R."/>
            <person name="Unwin L."/>
            <person name="Whitehead S."/>
            <person name="Barrell B.G."/>
            <person name="Parkhill J."/>
        </authorList>
    </citation>
    <scope>NUCLEOTIDE SEQUENCE [LARGE SCALE GENOMIC DNA]</scope>
    <source>
        <strain>ATCC 700971 / NCTC 13129 / Biotype gravis</strain>
    </source>
</reference>
<comment type="function">
    <text evidence="1">Participates actively in the response to hyperosmotic and heat shock by preventing the aggregation of stress-denatured proteins and by disaggregating proteins, also in an autonomous, DnaK-independent fashion. Unfolded proteins bind initially to DnaJ; upon interaction with the DnaJ-bound protein, DnaK hydrolyzes its bound ATP, resulting in the formation of a stable complex. GrpE releases ADP from DnaK; ATP binding to DnaK triggers the release of the substrate protein, thus completing the reaction cycle. Several rounds of ATP-dependent interactions between DnaJ, DnaK and GrpE are required for fully efficient folding. Also involved, together with DnaK and GrpE, in the DNA replication of plasmids through activation of initiation proteins.</text>
</comment>
<comment type="cofactor">
    <cofactor evidence="1">
        <name>Zn(2+)</name>
        <dbReference type="ChEBI" id="CHEBI:29105"/>
    </cofactor>
    <text evidence="1">Binds 2 Zn(2+) ions per monomer.</text>
</comment>
<comment type="subunit">
    <text evidence="1">Homodimer.</text>
</comment>
<comment type="subcellular location">
    <subcellularLocation>
        <location evidence="1">Cytoplasm</location>
    </subcellularLocation>
</comment>
<comment type="domain">
    <text evidence="1">The J domain is necessary and sufficient to stimulate DnaK ATPase activity. Zinc center 1 plays an important role in the autonomous, DnaK-independent chaperone activity of DnaJ. Zinc center 2 is essential for interaction with DnaK and for DnaJ activity.</text>
</comment>
<comment type="similarity">
    <text evidence="1">Belongs to the DnaJ family.</text>
</comment>
<evidence type="ECO:0000255" key="1">
    <source>
        <dbReference type="HAMAP-Rule" id="MF_01152"/>
    </source>
</evidence>
<dbReference type="EMBL" id="BX248359">
    <property type="protein sequence ID" value="CAE50249.1"/>
    <property type="molecule type" value="Genomic_DNA"/>
</dbReference>
<dbReference type="SMR" id="Q6NG14"/>
<dbReference type="STRING" id="257309.DIP1720"/>
<dbReference type="KEGG" id="cdi:DIP1720"/>
<dbReference type="HOGENOM" id="CLU_017633_0_7_11"/>
<dbReference type="Proteomes" id="UP000002198">
    <property type="component" value="Chromosome"/>
</dbReference>
<dbReference type="GO" id="GO:0005737">
    <property type="term" value="C:cytoplasm"/>
    <property type="evidence" value="ECO:0007669"/>
    <property type="project" value="UniProtKB-SubCell"/>
</dbReference>
<dbReference type="GO" id="GO:0005524">
    <property type="term" value="F:ATP binding"/>
    <property type="evidence" value="ECO:0007669"/>
    <property type="project" value="InterPro"/>
</dbReference>
<dbReference type="GO" id="GO:0031072">
    <property type="term" value="F:heat shock protein binding"/>
    <property type="evidence" value="ECO:0007669"/>
    <property type="project" value="InterPro"/>
</dbReference>
<dbReference type="GO" id="GO:0051082">
    <property type="term" value="F:unfolded protein binding"/>
    <property type="evidence" value="ECO:0007669"/>
    <property type="project" value="UniProtKB-UniRule"/>
</dbReference>
<dbReference type="GO" id="GO:0008270">
    <property type="term" value="F:zinc ion binding"/>
    <property type="evidence" value="ECO:0007669"/>
    <property type="project" value="UniProtKB-UniRule"/>
</dbReference>
<dbReference type="GO" id="GO:0051085">
    <property type="term" value="P:chaperone cofactor-dependent protein refolding"/>
    <property type="evidence" value="ECO:0007669"/>
    <property type="project" value="TreeGrafter"/>
</dbReference>
<dbReference type="GO" id="GO:0006260">
    <property type="term" value="P:DNA replication"/>
    <property type="evidence" value="ECO:0007669"/>
    <property type="project" value="UniProtKB-KW"/>
</dbReference>
<dbReference type="GO" id="GO:0042026">
    <property type="term" value="P:protein refolding"/>
    <property type="evidence" value="ECO:0007669"/>
    <property type="project" value="TreeGrafter"/>
</dbReference>
<dbReference type="GO" id="GO:0009408">
    <property type="term" value="P:response to heat"/>
    <property type="evidence" value="ECO:0007669"/>
    <property type="project" value="InterPro"/>
</dbReference>
<dbReference type="CDD" id="cd06257">
    <property type="entry name" value="DnaJ"/>
    <property type="match status" value="1"/>
</dbReference>
<dbReference type="CDD" id="cd10747">
    <property type="entry name" value="DnaJ_C"/>
    <property type="match status" value="1"/>
</dbReference>
<dbReference type="CDD" id="cd10719">
    <property type="entry name" value="DnaJ_zf"/>
    <property type="match status" value="1"/>
</dbReference>
<dbReference type="FunFam" id="2.60.260.20:FF:000005">
    <property type="entry name" value="Chaperone protein dnaJ 1, mitochondrial"/>
    <property type="match status" value="1"/>
</dbReference>
<dbReference type="FunFam" id="2.10.230.10:FF:000002">
    <property type="entry name" value="Molecular chaperone DnaJ"/>
    <property type="match status" value="1"/>
</dbReference>
<dbReference type="Gene3D" id="6.20.20.10">
    <property type="match status" value="2"/>
</dbReference>
<dbReference type="Gene3D" id="1.10.287.110">
    <property type="entry name" value="DnaJ domain"/>
    <property type="match status" value="1"/>
</dbReference>
<dbReference type="Gene3D" id="2.60.260.20">
    <property type="entry name" value="Urease metallochaperone UreE, N-terminal domain"/>
    <property type="match status" value="2"/>
</dbReference>
<dbReference type="HAMAP" id="MF_01152">
    <property type="entry name" value="DnaJ"/>
    <property type="match status" value="1"/>
</dbReference>
<dbReference type="InterPro" id="IPR012724">
    <property type="entry name" value="DnaJ"/>
</dbReference>
<dbReference type="InterPro" id="IPR002939">
    <property type="entry name" value="DnaJ_C"/>
</dbReference>
<dbReference type="InterPro" id="IPR001623">
    <property type="entry name" value="DnaJ_domain"/>
</dbReference>
<dbReference type="InterPro" id="IPR008971">
    <property type="entry name" value="HSP40/DnaJ_pept-bd"/>
</dbReference>
<dbReference type="InterPro" id="IPR001305">
    <property type="entry name" value="HSP_DnaJ_Cys-rich_dom"/>
</dbReference>
<dbReference type="InterPro" id="IPR036410">
    <property type="entry name" value="HSP_DnaJ_Cys-rich_dom_sf"/>
</dbReference>
<dbReference type="InterPro" id="IPR036869">
    <property type="entry name" value="J_dom_sf"/>
</dbReference>
<dbReference type="NCBIfam" id="TIGR02349">
    <property type="entry name" value="DnaJ_bact"/>
    <property type="match status" value="1"/>
</dbReference>
<dbReference type="NCBIfam" id="NF008035">
    <property type="entry name" value="PRK10767.1"/>
    <property type="match status" value="1"/>
</dbReference>
<dbReference type="NCBIfam" id="NF010871">
    <property type="entry name" value="PRK14278.1"/>
    <property type="match status" value="1"/>
</dbReference>
<dbReference type="PANTHER" id="PTHR43096:SF48">
    <property type="entry name" value="CHAPERONE PROTEIN DNAJ"/>
    <property type="match status" value="1"/>
</dbReference>
<dbReference type="PANTHER" id="PTHR43096">
    <property type="entry name" value="DNAJ HOMOLOG 1, MITOCHONDRIAL-RELATED"/>
    <property type="match status" value="1"/>
</dbReference>
<dbReference type="Pfam" id="PF00226">
    <property type="entry name" value="DnaJ"/>
    <property type="match status" value="1"/>
</dbReference>
<dbReference type="Pfam" id="PF01556">
    <property type="entry name" value="DnaJ_C"/>
    <property type="match status" value="1"/>
</dbReference>
<dbReference type="Pfam" id="PF00684">
    <property type="entry name" value="DnaJ_CXXCXGXG"/>
    <property type="match status" value="1"/>
</dbReference>
<dbReference type="PRINTS" id="PR00625">
    <property type="entry name" value="JDOMAIN"/>
</dbReference>
<dbReference type="SMART" id="SM00271">
    <property type="entry name" value="DnaJ"/>
    <property type="match status" value="1"/>
</dbReference>
<dbReference type="SUPFAM" id="SSF46565">
    <property type="entry name" value="Chaperone J-domain"/>
    <property type="match status" value="1"/>
</dbReference>
<dbReference type="SUPFAM" id="SSF57938">
    <property type="entry name" value="DnaJ/Hsp40 cysteine-rich domain"/>
    <property type="match status" value="1"/>
</dbReference>
<dbReference type="SUPFAM" id="SSF49493">
    <property type="entry name" value="HSP40/DnaJ peptide-binding domain"/>
    <property type="match status" value="2"/>
</dbReference>
<dbReference type="PROSITE" id="PS50076">
    <property type="entry name" value="DNAJ_2"/>
    <property type="match status" value="1"/>
</dbReference>
<dbReference type="PROSITE" id="PS51188">
    <property type="entry name" value="ZF_CR"/>
    <property type="match status" value="1"/>
</dbReference>
<accession>Q6NG14</accession>
<organism>
    <name type="scientific">Corynebacterium diphtheriae (strain ATCC 700971 / NCTC 13129 / Biotype gravis)</name>
    <dbReference type="NCBI Taxonomy" id="257309"/>
    <lineage>
        <taxon>Bacteria</taxon>
        <taxon>Bacillati</taxon>
        <taxon>Actinomycetota</taxon>
        <taxon>Actinomycetes</taxon>
        <taxon>Mycobacteriales</taxon>
        <taxon>Corynebacteriaceae</taxon>
        <taxon>Corynebacterium</taxon>
    </lineage>
</organism>
<proteinExistence type="inferred from homology"/>
<feature type="chain" id="PRO_0000070766" description="Chaperone protein DnaJ 1">
    <location>
        <begin position="1"/>
        <end position="375"/>
    </location>
</feature>
<feature type="domain" description="J" evidence="1">
    <location>
        <begin position="4"/>
        <end position="68"/>
    </location>
</feature>
<feature type="repeat" description="CXXCXGXG motif">
    <location>
        <begin position="140"/>
        <end position="147"/>
    </location>
</feature>
<feature type="repeat" description="CXXCXGXG motif">
    <location>
        <begin position="157"/>
        <end position="164"/>
    </location>
</feature>
<feature type="repeat" description="CXXCXGXG motif">
    <location>
        <begin position="183"/>
        <end position="190"/>
    </location>
</feature>
<feature type="repeat" description="CXXCXGXG motif">
    <location>
        <begin position="197"/>
        <end position="204"/>
    </location>
</feature>
<feature type="zinc finger region" description="CR-type" evidence="1">
    <location>
        <begin position="127"/>
        <end position="209"/>
    </location>
</feature>
<feature type="binding site" evidence="1">
    <location>
        <position position="140"/>
    </location>
    <ligand>
        <name>Zn(2+)</name>
        <dbReference type="ChEBI" id="CHEBI:29105"/>
        <label>1</label>
    </ligand>
</feature>
<feature type="binding site" evidence="1">
    <location>
        <position position="143"/>
    </location>
    <ligand>
        <name>Zn(2+)</name>
        <dbReference type="ChEBI" id="CHEBI:29105"/>
        <label>1</label>
    </ligand>
</feature>
<feature type="binding site" evidence="1">
    <location>
        <position position="157"/>
    </location>
    <ligand>
        <name>Zn(2+)</name>
        <dbReference type="ChEBI" id="CHEBI:29105"/>
        <label>2</label>
    </ligand>
</feature>
<feature type="binding site" evidence="1">
    <location>
        <position position="160"/>
    </location>
    <ligand>
        <name>Zn(2+)</name>
        <dbReference type="ChEBI" id="CHEBI:29105"/>
        <label>2</label>
    </ligand>
</feature>
<feature type="binding site" evidence="1">
    <location>
        <position position="183"/>
    </location>
    <ligand>
        <name>Zn(2+)</name>
        <dbReference type="ChEBI" id="CHEBI:29105"/>
        <label>2</label>
    </ligand>
</feature>
<feature type="binding site" evidence="1">
    <location>
        <position position="186"/>
    </location>
    <ligand>
        <name>Zn(2+)</name>
        <dbReference type="ChEBI" id="CHEBI:29105"/>
        <label>2</label>
    </ligand>
</feature>
<feature type="binding site" evidence="1">
    <location>
        <position position="197"/>
    </location>
    <ligand>
        <name>Zn(2+)</name>
        <dbReference type="ChEBI" id="CHEBI:29105"/>
        <label>1</label>
    </ligand>
</feature>
<feature type="binding site" evidence="1">
    <location>
        <position position="200"/>
    </location>
    <ligand>
        <name>Zn(2+)</name>
        <dbReference type="ChEBI" id="CHEBI:29105"/>
        <label>1</label>
    </ligand>
</feature>
<sequence length="375" mass="40153">MARDYYAILGVERDATDNEIKKAYRKLARKYHPDVNDTEEAAEKFSKISIAQEVLLDAEKRRIVDMGGDPMAQGGGDAGYGAGGGLGDIFEAFFGGGGGSRGPRSRVQPGSDALLRTTLTLEEAYLGTKKPITIDTAILCDRCEGTGSKSKSKPNVCSTCNGSGEIQQMQRSFLGNVMTSSPCPTCRGTGEVIPDPCDKCGGDGRVRTQRDLIVNVPAGIADGMRIRMAGQGEVGPGGGPAGDLYIEVMMQQHPVFQREGNDLHMSVHVPMVDAALGATTSVESLSGDAIDFEIPAGVQPAETIVIEGKGMPQLRGEGFGNMIAHVDVSIPTQLDEKSKELLNKLRDHRSDESSVRTADDSDDSLFGRLRNRFRR</sequence>
<name>DNAJ1_CORDI</name>